<organism>
    <name type="scientific">Veronica arvensis</name>
    <name type="common">Wall speedwell</name>
    <dbReference type="NCBI Taxonomy" id="46032"/>
    <lineage>
        <taxon>Eukaryota</taxon>
        <taxon>Viridiplantae</taxon>
        <taxon>Streptophyta</taxon>
        <taxon>Embryophyta</taxon>
        <taxon>Tracheophyta</taxon>
        <taxon>Spermatophyta</taxon>
        <taxon>Magnoliopsida</taxon>
        <taxon>eudicotyledons</taxon>
        <taxon>Gunneridae</taxon>
        <taxon>Pentapetalae</taxon>
        <taxon>asterids</taxon>
        <taxon>lamiids</taxon>
        <taxon>Lamiales</taxon>
        <taxon>Plantaginaceae</taxon>
        <taxon>Veroniceae</taxon>
        <taxon>Veronica</taxon>
        <taxon>Veronica subgen. Chamaedrys</taxon>
    </lineage>
</organism>
<proteinExistence type="inferred from homology"/>
<keyword id="KW-0150">Chloroplast</keyword>
<keyword id="KW-0507">mRNA processing</keyword>
<keyword id="KW-0934">Plastid</keyword>
<keyword id="KW-0694">RNA-binding</keyword>
<keyword id="KW-0819">tRNA processing</keyword>
<gene>
    <name evidence="1" type="primary">matK</name>
</gene>
<dbReference type="EMBL" id="AF052003">
    <property type="protein sequence ID" value="AAF21708.1"/>
    <property type="molecule type" value="Genomic_DNA"/>
</dbReference>
<dbReference type="GO" id="GO:0009507">
    <property type="term" value="C:chloroplast"/>
    <property type="evidence" value="ECO:0007669"/>
    <property type="project" value="UniProtKB-SubCell"/>
</dbReference>
<dbReference type="GO" id="GO:0003723">
    <property type="term" value="F:RNA binding"/>
    <property type="evidence" value="ECO:0007669"/>
    <property type="project" value="UniProtKB-KW"/>
</dbReference>
<dbReference type="GO" id="GO:0006397">
    <property type="term" value="P:mRNA processing"/>
    <property type="evidence" value="ECO:0007669"/>
    <property type="project" value="UniProtKB-KW"/>
</dbReference>
<dbReference type="GO" id="GO:0008380">
    <property type="term" value="P:RNA splicing"/>
    <property type="evidence" value="ECO:0007669"/>
    <property type="project" value="UniProtKB-UniRule"/>
</dbReference>
<dbReference type="GO" id="GO:0008033">
    <property type="term" value="P:tRNA processing"/>
    <property type="evidence" value="ECO:0007669"/>
    <property type="project" value="UniProtKB-KW"/>
</dbReference>
<dbReference type="HAMAP" id="MF_01390">
    <property type="entry name" value="MatK"/>
    <property type="match status" value="1"/>
</dbReference>
<dbReference type="InterPro" id="IPR024937">
    <property type="entry name" value="Domain_X"/>
</dbReference>
<dbReference type="InterPro" id="IPR002866">
    <property type="entry name" value="Maturase_MatK"/>
</dbReference>
<dbReference type="InterPro" id="IPR024942">
    <property type="entry name" value="Maturase_MatK_N"/>
</dbReference>
<dbReference type="PANTHER" id="PTHR34811">
    <property type="entry name" value="MATURASE K"/>
    <property type="match status" value="1"/>
</dbReference>
<dbReference type="PANTHER" id="PTHR34811:SF1">
    <property type="entry name" value="MATURASE K"/>
    <property type="match status" value="1"/>
</dbReference>
<dbReference type="Pfam" id="PF01348">
    <property type="entry name" value="Intron_maturas2"/>
    <property type="match status" value="1"/>
</dbReference>
<dbReference type="Pfam" id="PF01824">
    <property type="entry name" value="MatK_N"/>
    <property type="match status" value="1"/>
</dbReference>
<sequence>MEKIQRYLQLERSQQHDFLYPLIFQEYIYAFADDRTFSRXXSILSGNPDSENLGSRKKYSLLIVKRLITRMYQQNHFLISSNDSNQNKNPFWGRNKDFYSQILAEGFAFIVEIPFSLQLLSSLGGKKKRVVNSQNLRSIHSIFPFLEDNFSHLHFVLDILIPHPVHVEILIQTLRYRVKDVSSLHLLRFLLNEYCNCNSIITTKKAGSSFSKRNQRLFLFLYNSHVCEYESVFGFLRNQSFHLRSASSGALLERIYFYGKVERLVNAFDKVKDYQVNLWLVKEPSMHYVRYQRKSILASKGTSHFMNKWKCYLITFWQWHFALWFHPRRISRNQLANYFLEFVGYLSNIRTNPTVVRSQSLQNXFLINNAIKKFETLVPIIPLISSLAKAKFCNVLGHPTSKPVWADLSDSNIIYRFVHICRNLSHYYSGSSKKKSLYRIKYILRLSCARTLARKHKSTVRVFLKTLGSGLLEEFLISEEDVLCWTFPKTSSALRGVYKSRIWYLDIICINDLANLK</sequence>
<geneLocation type="chloroplast"/>
<protein>
    <recommendedName>
        <fullName evidence="1">Maturase K</fullName>
    </recommendedName>
    <alternativeName>
        <fullName evidence="1">Intron maturase</fullName>
    </alternativeName>
</protein>
<comment type="function">
    <text evidence="1">Usually encoded in the trnK tRNA gene intron. Probably assists in splicing its own and other chloroplast group II introns.</text>
</comment>
<comment type="subcellular location">
    <subcellularLocation>
        <location>Plastid</location>
        <location>Chloroplast</location>
    </subcellularLocation>
</comment>
<comment type="similarity">
    <text evidence="1">Belongs to the intron maturase 2 family. MatK subfamily.</text>
</comment>
<name>MATK_VERAR</name>
<accession>Q9TIQ4</accession>
<feature type="chain" id="PRO_0000143781" description="Maturase K">
    <location>
        <begin position="1"/>
        <end position="517"/>
    </location>
</feature>
<evidence type="ECO:0000255" key="1">
    <source>
        <dbReference type="HAMAP-Rule" id="MF_01390"/>
    </source>
</evidence>
<reference key="1">
    <citation type="submission" date="1998-03" db="EMBL/GenBank/DDBJ databases">
        <title>The evolution of parasitism in Scrophulariaceae/Orobanchaceae: a critical analysis of progressive evolution and transitional forms based on plastid gene sequences.</title>
        <authorList>
            <person name="Young N.D."/>
            <person name="Steiner K.E."/>
            <person name="dePamphilis C.W."/>
        </authorList>
    </citation>
    <scope>NUCLEOTIDE SEQUENCE [GENOMIC DNA]</scope>
</reference>